<proteinExistence type="inferred from homology"/>
<organism>
    <name type="scientific">Streptococcus pyogenes</name>
    <dbReference type="NCBI Taxonomy" id="1314"/>
    <lineage>
        <taxon>Bacteria</taxon>
        <taxon>Bacillati</taxon>
        <taxon>Bacillota</taxon>
        <taxon>Bacilli</taxon>
        <taxon>Lactobacillales</taxon>
        <taxon>Streptococcaceae</taxon>
        <taxon>Streptococcus</taxon>
    </lineage>
</organism>
<dbReference type="EMBL" id="M57780">
    <property type="status" value="NOT_ANNOTATED_CDS"/>
    <property type="molecule type" value="Genomic_DNA"/>
</dbReference>
<dbReference type="SMR" id="P29840"/>
<dbReference type="GO" id="GO:0003690">
    <property type="term" value="F:double-stranded DNA binding"/>
    <property type="evidence" value="ECO:0007669"/>
    <property type="project" value="InterPro"/>
</dbReference>
<dbReference type="GO" id="GO:0006265">
    <property type="term" value="P:DNA topological change"/>
    <property type="evidence" value="ECO:0007669"/>
    <property type="project" value="InterPro"/>
</dbReference>
<dbReference type="Gene3D" id="6.10.10.80">
    <property type="entry name" value="Small, acid-soluble spore protein, alpha/beta type-like"/>
    <property type="match status" value="1"/>
</dbReference>
<dbReference type="InterPro" id="IPR001448">
    <property type="entry name" value="SASP_alpha/beta-type"/>
</dbReference>
<dbReference type="InterPro" id="IPR018126">
    <property type="entry name" value="SASP_alpha/beta-type_CS"/>
</dbReference>
<dbReference type="InterPro" id="IPR050847">
    <property type="entry name" value="SASP_DNA-binding"/>
</dbReference>
<dbReference type="InterPro" id="IPR038300">
    <property type="entry name" value="SASP_sf_alpha/beta"/>
</dbReference>
<dbReference type="PANTHER" id="PTHR36107">
    <property type="entry name" value="SMALL, ACID-SOLUBLE SPORE PROTEIN A"/>
    <property type="match status" value="1"/>
</dbReference>
<dbReference type="PANTHER" id="PTHR36107:SF1">
    <property type="entry name" value="SMALL, ACID-SOLUBLE SPORE PROTEIN A"/>
    <property type="match status" value="1"/>
</dbReference>
<dbReference type="Pfam" id="PF00269">
    <property type="entry name" value="SASP"/>
    <property type="match status" value="1"/>
</dbReference>
<dbReference type="PROSITE" id="PS00304">
    <property type="entry name" value="SASP_1"/>
    <property type="match status" value="1"/>
</dbReference>
<dbReference type="PROSITE" id="PS00684">
    <property type="entry name" value="SASP_2"/>
    <property type="match status" value="1"/>
</dbReference>
<gene>
    <name type="primary">sspS</name>
</gene>
<name>SSPS_STRPY</name>
<sequence>MNTHGKLSKRIKQKFIKQLVAPGAQAAIDQMKFEIASEFGVNLGPDTTACANGFFGAEITKCLVQLREKLGSRY</sequence>
<comment type="similarity">
    <text evidence="1">Belongs to the alpha/beta-type SASP family.</text>
</comment>
<protein>
    <recommendedName>
        <fullName>Protein SspS</fullName>
    </recommendedName>
</protein>
<feature type="chain" id="PRO_0000196320" description="Protein SspS">
    <location>
        <begin position="1"/>
        <end position="74"/>
    </location>
</feature>
<evidence type="ECO:0000305" key="1"/>
<keyword id="KW-0238">DNA-binding</keyword>
<accession>P29840</accession>
<reference key="1">
    <citation type="journal article" date="1991" name="Genomics">
        <title>Nonsporulating bacterial species contain DNA sequences homologous to the Bacillus spore-specific C-protein gene.</title>
        <authorList>
            <person name="Vocero-Villeta A.M."/>
            <person name="Schilling D.M."/>
            <person name="Fliss E.R."/>
        </authorList>
    </citation>
    <scope>NUCLEOTIDE SEQUENCE [GENOMIC DNA]</scope>
</reference>